<dbReference type="EMBL" id="AF121977">
    <property type="protein sequence ID" value="AAD27597.1"/>
    <property type="status" value="ALT_INIT"/>
    <property type="molecule type" value="Genomic_DNA"/>
</dbReference>
<dbReference type="EMBL" id="AY073753">
    <property type="protein sequence ID" value="AAL61416.1"/>
    <property type="molecule type" value="Genomic_DNA"/>
</dbReference>
<dbReference type="EMBL" id="AY317588">
    <property type="protein sequence ID" value="AAP70984.1"/>
    <property type="molecule type" value="Genomic_DNA"/>
</dbReference>
<dbReference type="CCDS" id="CCDS21702.2"/>
<dbReference type="RefSeq" id="NP_064687.2">
    <property type="nucleotide sequence ID" value="NM_020291.2"/>
</dbReference>
<dbReference type="SMR" id="Q8VEZ0"/>
<dbReference type="FunCoup" id="Q8VEZ0">
    <property type="interactions" value="1173"/>
</dbReference>
<dbReference type="STRING" id="10090.ENSMUSP00000071583"/>
<dbReference type="GlyCosmos" id="Q8VEZ0">
    <property type="glycosylation" value="2 sites, No reported glycans"/>
</dbReference>
<dbReference type="GlyGen" id="Q8VEZ0">
    <property type="glycosylation" value="2 sites"/>
</dbReference>
<dbReference type="PaxDb" id="10090-ENSMUSP00000071583"/>
<dbReference type="DNASU" id="56861"/>
<dbReference type="Ensembl" id="ENSMUST00000217653.3">
    <property type="protein sequence ID" value="ENSMUSP00000149301.2"/>
    <property type="gene ID" value="ENSMUSG00000063120.7"/>
</dbReference>
<dbReference type="GeneID" id="56861"/>
<dbReference type="KEGG" id="mmu:56861"/>
<dbReference type="UCSC" id="uc009jbv.1">
    <property type="organism name" value="mouse"/>
</dbReference>
<dbReference type="AGR" id="MGI:3030314"/>
<dbReference type="CTD" id="56861"/>
<dbReference type="MGI" id="MGI:3030314">
    <property type="gene designation" value="Or5p57"/>
</dbReference>
<dbReference type="VEuPathDB" id="HostDB:ENSMUSG00000063120"/>
<dbReference type="eggNOG" id="ENOG502SKA1">
    <property type="taxonomic scope" value="Eukaryota"/>
</dbReference>
<dbReference type="GeneTree" id="ENSGT01130000278279"/>
<dbReference type="InParanoid" id="Q8VEZ0"/>
<dbReference type="OrthoDB" id="9873506at2759"/>
<dbReference type="PhylomeDB" id="Q8VEZ0"/>
<dbReference type="TreeFam" id="TF352753"/>
<dbReference type="BioGRID-ORCS" id="56861">
    <property type="hits" value="1 hit in 38 CRISPR screens"/>
</dbReference>
<dbReference type="PRO" id="PR:Q8VEZ0"/>
<dbReference type="Proteomes" id="UP000000589">
    <property type="component" value="Chromosome 7"/>
</dbReference>
<dbReference type="RNAct" id="Q8VEZ0">
    <property type="molecule type" value="protein"/>
</dbReference>
<dbReference type="Bgee" id="ENSMUSG00000063120">
    <property type="expression patterns" value="Expressed in mesodermal cell in embryo and 17 other cell types or tissues"/>
</dbReference>
<dbReference type="ExpressionAtlas" id="Q8VEZ0">
    <property type="expression patterns" value="baseline and differential"/>
</dbReference>
<dbReference type="GO" id="GO:0016020">
    <property type="term" value="C:membrane"/>
    <property type="evidence" value="ECO:0000247"/>
    <property type="project" value="MGI"/>
</dbReference>
<dbReference type="GO" id="GO:0005886">
    <property type="term" value="C:plasma membrane"/>
    <property type="evidence" value="ECO:0007669"/>
    <property type="project" value="UniProtKB-SubCell"/>
</dbReference>
<dbReference type="GO" id="GO:0004930">
    <property type="term" value="F:G protein-coupled receptor activity"/>
    <property type="evidence" value="ECO:0007669"/>
    <property type="project" value="UniProtKB-KW"/>
</dbReference>
<dbReference type="GO" id="GO:0004984">
    <property type="term" value="F:olfactory receptor activity"/>
    <property type="evidence" value="ECO:0000247"/>
    <property type="project" value="MGI"/>
</dbReference>
<dbReference type="GO" id="GO:0007186">
    <property type="term" value="P:G protein-coupled receptor signaling pathway"/>
    <property type="evidence" value="ECO:0000247"/>
    <property type="project" value="MGI"/>
</dbReference>
<dbReference type="GO" id="GO:0007608">
    <property type="term" value="P:sensory perception of smell"/>
    <property type="evidence" value="ECO:0000247"/>
    <property type="project" value="MGI"/>
</dbReference>
<dbReference type="CDD" id="cd15416">
    <property type="entry name" value="7tmA_OR5P-like"/>
    <property type="match status" value="1"/>
</dbReference>
<dbReference type="FunFam" id="1.10.1220.70:FF:000001">
    <property type="entry name" value="Olfactory receptor"/>
    <property type="match status" value="1"/>
</dbReference>
<dbReference type="FunFam" id="1.20.1070.10:FF:000004">
    <property type="entry name" value="Olfactory receptor"/>
    <property type="match status" value="1"/>
</dbReference>
<dbReference type="Gene3D" id="1.20.1070.10">
    <property type="entry name" value="Rhodopsin 7-helix transmembrane proteins"/>
    <property type="match status" value="1"/>
</dbReference>
<dbReference type="InterPro" id="IPR000276">
    <property type="entry name" value="GPCR_Rhodpsn"/>
</dbReference>
<dbReference type="InterPro" id="IPR017452">
    <property type="entry name" value="GPCR_Rhodpsn_7TM"/>
</dbReference>
<dbReference type="InterPro" id="IPR000725">
    <property type="entry name" value="Olfact_rcpt"/>
</dbReference>
<dbReference type="PANTHER" id="PTHR48018">
    <property type="entry name" value="OLFACTORY RECEPTOR"/>
    <property type="match status" value="1"/>
</dbReference>
<dbReference type="Pfam" id="PF13853">
    <property type="entry name" value="7tm_4"/>
    <property type="match status" value="1"/>
</dbReference>
<dbReference type="PRINTS" id="PR00237">
    <property type="entry name" value="GPCRRHODOPSN"/>
</dbReference>
<dbReference type="PRINTS" id="PR00245">
    <property type="entry name" value="OLFACTORYR"/>
</dbReference>
<dbReference type="SUPFAM" id="SSF81321">
    <property type="entry name" value="Family A G protein-coupled receptor-like"/>
    <property type="match status" value="1"/>
</dbReference>
<dbReference type="PROSITE" id="PS00237">
    <property type="entry name" value="G_PROTEIN_RECEP_F1_1"/>
    <property type="match status" value="1"/>
</dbReference>
<dbReference type="PROSITE" id="PS50262">
    <property type="entry name" value="G_PROTEIN_RECEP_F1_2"/>
    <property type="match status" value="1"/>
</dbReference>
<sequence>MEPGNYTVVTEFILLGLTDDITVSVILFVMFLIVYSVTLMGNLNIIVLIRTSPQLHTPMYLFLSHLAFLDIGYSSSVTPIMLRGFLRKGTFIPVAGCVAQLCIVVAFGTSESFLLASMAYDRYVAICSPLLYSTQMSSTVCILLVGTSYLGGWVNAWIFTGCSLNLSFCGPNKINHFFCDYSPLLKLSCSHDFSFEVIPAISSGSIIVVTVFIIALSYVYILVSILKMRSTEGRQKAFSTCTSHLTAVTLFFGTITFIYVMPQSSYSTDQNKVVSVFYTVVIPMLNPLIYSFRNKEVKEAMKKLIAKTHWWS</sequence>
<name>O5P87_MOUSE</name>
<proteinExistence type="inferred from homology"/>
<gene>
    <name evidence="5" type="primary">Or5p57</name>
    <name evidence="5" type="synonym">Mor204-32</name>
    <name evidence="5" type="synonym">Olfr480</name>
</gene>
<organism>
    <name type="scientific">Mus musculus</name>
    <name type="common">Mouse</name>
    <dbReference type="NCBI Taxonomy" id="10090"/>
    <lineage>
        <taxon>Eukaryota</taxon>
        <taxon>Metazoa</taxon>
        <taxon>Chordata</taxon>
        <taxon>Craniata</taxon>
        <taxon>Vertebrata</taxon>
        <taxon>Euteleostomi</taxon>
        <taxon>Mammalia</taxon>
        <taxon>Eutheria</taxon>
        <taxon>Euarchontoglires</taxon>
        <taxon>Glires</taxon>
        <taxon>Rodentia</taxon>
        <taxon>Myomorpha</taxon>
        <taxon>Muroidea</taxon>
        <taxon>Muridae</taxon>
        <taxon>Murinae</taxon>
        <taxon>Mus</taxon>
        <taxon>Mus</taxon>
    </lineage>
</organism>
<evidence type="ECO:0000255" key="1"/>
<evidence type="ECO:0000255" key="2">
    <source>
        <dbReference type="PROSITE-ProRule" id="PRU00521"/>
    </source>
</evidence>
<evidence type="ECO:0000269" key="3">
    <source>
    </source>
</evidence>
<evidence type="ECO:0000305" key="4"/>
<evidence type="ECO:0000312" key="5">
    <source>
        <dbReference type="MGI" id="MGI:3030314"/>
    </source>
</evidence>
<reference key="1">
    <citation type="journal article" date="1999" name="Cell">
        <title>Combinatorial receptor codes for odors.</title>
        <authorList>
            <person name="Malnic B."/>
            <person name="Hirono J."/>
            <person name="Sato T."/>
            <person name="Buck L.B."/>
        </authorList>
    </citation>
    <scope>NUCLEOTIDE SEQUENCE [GENOMIC DNA]</scope>
    <source>
        <strain>BALB/cJ</strain>
    </source>
</reference>
<reference key="2">
    <citation type="journal article" date="2002" name="Nat. Neurosci.">
        <title>The olfactory receptor gene superfamily of the mouse.</title>
        <authorList>
            <person name="Zhang X."/>
            <person name="Firestein S."/>
        </authorList>
    </citation>
    <scope>NUCLEOTIDE SEQUENCE [GENOMIC DNA]</scope>
    <scope>FUNCTION</scope>
</reference>
<reference key="3">
    <citation type="journal article" date="2002" name="Hum. Mol. Genet.">
        <title>Different evolutionary processes shaped the mouse and human olfactory receptor gene families.</title>
        <authorList>
            <person name="Young J.M."/>
            <person name="Friedman C."/>
            <person name="Williams E.M."/>
            <person name="Ross J.A."/>
            <person name="Tonnes-Priddy L."/>
            <person name="Trask B.J."/>
        </authorList>
    </citation>
    <scope>NUCLEOTIDE SEQUENCE [GENOMIC DNA]</scope>
</reference>
<reference key="4">
    <citation type="journal article" date="2002" name="Hum. Mol. Genet.">
        <authorList>
            <person name="Young J.M."/>
            <person name="Friedman C."/>
            <person name="Williams E.M."/>
            <person name="Ross J.A."/>
            <person name="Tonnes-Priddy L."/>
            <person name="Trask B.J."/>
        </authorList>
    </citation>
    <scope>ERRATUM OF PUBMED:11875048</scope>
</reference>
<keyword id="KW-1003">Cell membrane</keyword>
<keyword id="KW-1015">Disulfide bond</keyword>
<keyword id="KW-0297">G-protein coupled receptor</keyword>
<keyword id="KW-0325">Glycoprotein</keyword>
<keyword id="KW-0472">Membrane</keyword>
<keyword id="KW-0552">Olfaction</keyword>
<keyword id="KW-0675">Receptor</keyword>
<keyword id="KW-1185">Reference proteome</keyword>
<keyword id="KW-0716">Sensory transduction</keyword>
<keyword id="KW-0807">Transducer</keyword>
<keyword id="KW-0812">Transmembrane</keyword>
<keyword id="KW-1133">Transmembrane helix</keyword>
<feature type="chain" id="PRO_0000150838" description="Olfactory receptor 5p57">
    <location>
        <begin position="1"/>
        <end position="312"/>
    </location>
</feature>
<feature type="topological domain" description="Extracellular" evidence="1">
    <location>
        <begin position="1"/>
        <end position="25"/>
    </location>
</feature>
<feature type="transmembrane region" description="Helical; Name=1" evidence="1">
    <location>
        <begin position="26"/>
        <end position="46"/>
    </location>
</feature>
<feature type="topological domain" description="Cytoplasmic" evidence="1">
    <location>
        <begin position="47"/>
        <end position="54"/>
    </location>
</feature>
<feature type="transmembrane region" description="Helical; Name=2" evidence="1">
    <location>
        <begin position="55"/>
        <end position="75"/>
    </location>
</feature>
<feature type="topological domain" description="Extracellular" evidence="1">
    <location>
        <begin position="76"/>
        <end position="99"/>
    </location>
</feature>
<feature type="transmembrane region" description="Helical; Name=3" evidence="1">
    <location>
        <begin position="100"/>
        <end position="120"/>
    </location>
</feature>
<feature type="topological domain" description="Cytoplasmic" evidence="1">
    <location>
        <begin position="121"/>
        <end position="133"/>
    </location>
</feature>
<feature type="transmembrane region" description="Helical; Name=4" evidence="1">
    <location>
        <begin position="134"/>
        <end position="154"/>
    </location>
</feature>
<feature type="topological domain" description="Extracellular" evidence="1">
    <location>
        <begin position="155"/>
        <end position="196"/>
    </location>
</feature>
<feature type="transmembrane region" description="Helical; Name=5" evidence="1">
    <location>
        <begin position="197"/>
        <end position="217"/>
    </location>
</feature>
<feature type="topological domain" description="Cytoplasmic" evidence="1">
    <location>
        <begin position="218"/>
        <end position="237"/>
    </location>
</feature>
<feature type="transmembrane region" description="Helical; Name=6" evidence="1">
    <location>
        <begin position="238"/>
        <end position="258"/>
    </location>
</feature>
<feature type="topological domain" description="Extracellular" evidence="1">
    <location>
        <begin position="259"/>
        <end position="271"/>
    </location>
</feature>
<feature type="transmembrane region" description="Helical; Name=7" evidence="1">
    <location>
        <begin position="272"/>
        <end position="292"/>
    </location>
</feature>
<feature type="topological domain" description="Cytoplasmic" evidence="1">
    <location>
        <begin position="293"/>
        <end position="312"/>
    </location>
</feature>
<feature type="glycosylation site" description="N-linked (GlcNAc...) asparagine" evidence="1">
    <location>
        <position position="5"/>
    </location>
</feature>
<feature type="glycosylation site" description="N-linked (GlcNAc...) asparagine" evidence="1">
    <location>
        <position position="165"/>
    </location>
</feature>
<feature type="disulfide bond" evidence="2">
    <location>
        <begin position="97"/>
        <end position="189"/>
    </location>
</feature>
<comment type="function">
    <text evidence="3">Probable odorant receptor, which recognizes only aliphatic alcohols, suggesting that it may convey a 'woody' or 'sweet' sour.</text>
</comment>
<comment type="subcellular location">
    <subcellularLocation>
        <location evidence="4">Cell membrane</location>
        <topology evidence="1">Multi-pass membrane protein</topology>
    </subcellularLocation>
</comment>
<comment type="similarity">
    <text evidence="2">Belongs to the G-protein coupled receptor 1 family.</text>
</comment>
<comment type="sequence caution" evidence="4">
    <conflict type="erroneous initiation">
        <sequence resource="EMBL-CDS" id="AAD27597"/>
    </conflict>
</comment>
<protein>
    <recommendedName>
        <fullName evidence="4">Olfactory receptor 5p57</fullName>
    </recommendedName>
    <alternativeName>
        <fullName>Odorant receptor S25</fullName>
    </alternativeName>
    <alternativeName>
        <fullName evidence="5">Olfactory receptor 204-32</fullName>
    </alternativeName>
    <alternativeName>
        <fullName evidence="5">Olfactory receptor 480</fullName>
    </alternativeName>
</protein>
<accession>Q8VEZ0</accession>
<accession>Q9WU91</accession>